<sequence>MSIENTLPTYPSLALALSQQAVALTPAEMHGLISGMLCGGSKDNGWQTLVHDLTNEGVAFPQALSLPLQQLHEATQEALENEGFMFQLLIPEGEDVTVFDRADALSGWVNHFLLGLGMLQPKLAQVKDEVGEAIDDLRNIAQLGYDEDEDQEELAQSLEEVVEYVRVAAILCHIEFTQQKPTAPEMHKPTLH</sequence>
<dbReference type="EMBL" id="CP000308">
    <property type="protein sequence ID" value="ABG12324.1"/>
    <property type="molecule type" value="Genomic_DNA"/>
</dbReference>
<dbReference type="RefSeq" id="WP_002209953.1">
    <property type="nucleotide sequence ID" value="NZ_CP009906.1"/>
</dbReference>
<dbReference type="SMR" id="Q1CB48"/>
<dbReference type="KEGG" id="ypa:YPA_0356"/>
<dbReference type="Proteomes" id="UP000001971">
    <property type="component" value="Chromosome"/>
</dbReference>
<dbReference type="GO" id="GO:0005829">
    <property type="term" value="C:cytosol"/>
    <property type="evidence" value="ECO:0007669"/>
    <property type="project" value="TreeGrafter"/>
</dbReference>
<dbReference type="FunFam" id="1.20.120.740:FF:000001">
    <property type="entry name" value="UPF0149 protein YgfB"/>
    <property type="match status" value="1"/>
</dbReference>
<dbReference type="Gene3D" id="1.20.120.740">
    <property type="entry name" value="YgfB uncharacterised protein family UPF0149, PF03695"/>
    <property type="match status" value="1"/>
</dbReference>
<dbReference type="HAMAP" id="MF_00346">
    <property type="entry name" value="UPF0149"/>
    <property type="match status" value="1"/>
</dbReference>
<dbReference type="InterPro" id="IPR011978">
    <property type="entry name" value="YgfB-like"/>
</dbReference>
<dbReference type="InterPro" id="IPR036255">
    <property type="entry name" value="YgfB-like_sf"/>
</dbReference>
<dbReference type="NCBIfam" id="NF002477">
    <property type="entry name" value="PRK01736.1"/>
    <property type="match status" value="1"/>
</dbReference>
<dbReference type="NCBIfam" id="TIGR02292">
    <property type="entry name" value="ygfB_yecA"/>
    <property type="match status" value="1"/>
</dbReference>
<dbReference type="PANTHER" id="PTHR37528">
    <property type="entry name" value="UPF0149 PROTEIN YGFB"/>
    <property type="match status" value="1"/>
</dbReference>
<dbReference type="PANTHER" id="PTHR37528:SF1">
    <property type="entry name" value="UPF0149 PROTEIN YGFB"/>
    <property type="match status" value="1"/>
</dbReference>
<dbReference type="Pfam" id="PF03695">
    <property type="entry name" value="UPF0149"/>
    <property type="match status" value="1"/>
</dbReference>
<dbReference type="SUPFAM" id="SSF101327">
    <property type="entry name" value="YgfB-like"/>
    <property type="match status" value="1"/>
</dbReference>
<proteinExistence type="inferred from homology"/>
<comment type="similarity">
    <text evidence="1">Belongs to the UPF0149 family.</text>
</comment>
<evidence type="ECO:0000255" key="1">
    <source>
        <dbReference type="HAMAP-Rule" id="MF_00346"/>
    </source>
</evidence>
<gene>
    <name type="ordered locus">YPA_0356</name>
</gene>
<accession>Q1CB48</accession>
<reference key="1">
    <citation type="journal article" date="2006" name="J. Bacteriol.">
        <title>Complete genome sequence of Yersinia pestis strains Antiqua and Nepal516: evidence of gene reduction in an emerging pathogen.</title>
        <authorList>
            <person name="Chain P.S.G."/>
            <person name="Hu P."/>
            <person name="Malfatti S.A."/>
            <person name="Radnedge L."/>
            <person name="Larimer F."/>
            <person name="Vergez L.M."/>
            <person name="Worsham P."/>
            <person name="Chu M.C."/>
            <person name="Andersen G.L."/>
        </authorList>
    </citation>
    <scope>NUCLEOTIDE SEQUENCE [LARGE SCALE GENOMIC DNA]</scope>
    <source>
        <strain>Antiqua</strain>
    </source>
</reference>
<name>Y356_YERPA</name>
<feature type="chain" id="PRO_1000013055" description="UPF0149 protein YPA_0356">
    <location>
        <begin position="1"/>
        <end position="192"/>
    </location>
</feature>
<protein>
    <recommendedName>
        <fullName evidence="1">UPF0149 protein YPA_0356</fullName>
    </recommendedName>
</protein>
<organism>
    <name type="scientific">Yersinia pestis bv. Antiqua (strain Antiqua)</name>
    <dbReference type="NCBI Taxonomy" id="360102"/>
    <lineage>
        <taxon>Bacteria</taxon>
        <taxon>Pseudomonadati</taxon>
        <taxon>Pseudomonadota</taxon>
        <taxon>Gammaproteobacteria</taxon>
        <taxon>Enterobacterales</taxon>
        <taxon>Yersiniaceae</taxon>
        <taxon>Yersinia</taxon>
    </lineage>
</organism>